<keyword id="KW-0131">Cell cycle</keyword>
<keyword id="KW-0132">Cell division</keyword>
<keyword id="KW-0574">Periplasm</keyword>
<keyword id="KW-0732">Signal</keyword>
<reference key="1">
    <citation type="submission" date="2006-08" db="EMBL/GenBank/DDBJ databases">
        <title>Complete sequence of chromosome 1 of Shewanella sp. MR-7.</title>
        <authorList>
            <person name="Copeland A."/>
            <person name="Lucas S."/>
            <person name="Lapidus A."/>
            <person name="Barry K."/>
            <person name="Detter J.C."/>
            <person name="Glavina del Rio T."/>
            <person name="Hammon N."/>
            <person name="Israni S."/>
            <person name="Dalin E."/>
            <person name="Tice H."/>
            <person name="Pitluck S."/>
            <person name="Kiss H."/>
            <person name="Brettin T."/>
            <person name="Bruce D."/>
            <person name="Han C."/>
            <person name="Tapia R."/>
            <person name="Gilna P."/>
            <person name="Schmutz J."/>
            <person name="Larimer F."/>
            <person name="Land M."/>
            <person name="Hauser L."/>
            <person name="Kyrpides N."/>
            <person name="Mikhailova N."/>
            <person name="Nealson K."/>
            <person name="Konstantinidis K."/>
            <person name="Klappenbach J."/>
            <person name="Tiedje J."/>
            <person name="Richardson P."/>
        </authorList>
    </citation>
    <scope>NUCLEOTIDE SEQUENCE [LARGE SCALE GENOMIC DNA]</scope>
    <source>
        <strain>MR-7</strain>
    </source>
</reference>
<evidence type="ECO:0000255" key="1">
    <source>
        <dbReference type="HAMAP-Rule" id="MF_00671"/>
    </source>
</evidence>
<protein>
    <recommendedName>
        <fullName evidence="1">Tol-Pal system protein TolB</fullName>
    </recommendedName>
</protein>
<organism>
    <name type="scientific">Shewanella sp. (strain MR-7)</name>
    <dbReference type="NCBI Taxonomy" id="60481"/>
    <lineage>
        <taxon>Bacteria</taxon>
        <taxon>Pseudomonadati</taxon>
        <taxon>Pseudomonadota</taxon>
        <taxon>Gammaproteobacteria</taxon>
        <taxon>Alteromonadales</taxon>
        <taxon>Shewanellaceae</taxon>
        <taxon>Shewanella</taxon>
    </lineage>
</organism>
<gene>
    <name evidence="1" type="primary">tolB</name>
    <name type="ordered locus">Shewmr7_2440</name>
</gene>
<feature type="signal peptide" evidence="1">
    <location>
        <begin position="1"/>
        <end position="21"/>
    </location>
</feature>
<feature type="chain" id="PRO_5000128959" description="Tol-Pal system protein TolB" evidence="1">
    <location>
        <begin position="22"/>
        <end position="442"/>
    </location>
</feature>
<sequence length="442" mass="48344">MKILAKWLALAVLLCTMPAKAALDIVITEGVDAARPIAVMPFQWQGAGAPPQAIADVVMSDLIRSGTFKPLDELGLPQRGIGALAQFDASAWANVGAEAVVVGSVKPYGTDQFLVSFDLIDLVKAQNQALKGPTSATEFLMDSRQTVISAAQFRQYGHRISDIVYEKLTGIRGAFLTRISYVVVNHSQKAAYSLMIADYDGYNEQMLLRSPEPLMSPSWSPDGRRLAYVSFENKKAEIFVQDLYTQVRTKVSSFPGINGAPTFSPDGKSLAVTLSKDGQPEIYVIDIATKAAKRITNHYSIDTEPSWYPDGKSLLFTSERGGRPQLYRVDLNSGKVTRETFEGEWNLGGSITPDGRSMIFVNRTNGKFNIARMDLSTRFMQVLTSTRLDESPSVAPNGTMVIYGTTYQGKQVLAAVSTDGRFKARLPVGQGEVKSPSWSPFL</sequence>
<name>TOLB_SHESR</name>
<proteinExistence type="inferred from homology"/>
<comment type="function">
    <text evidence="1">Part of the Tol-Pal system, which plays a role in outer membrane invagination during cell division and is important for maintaining outer membrane integrity.</text>
</comment>
<comment type="subunit">
    <text evidence="1">The Tol-Pal system is composed of five core proteins: the inner membrane proteins TolA, TolQ and TolR, the periplasmic protein TolB and the outer membrane protein Pal. They form a network linking the inner and outer membranes and the peptidoglycan layer.</text>
</comment>
<comment type="subcellular location">
    <subcellularLocation>
        <location evidence="1">Periplasm</location>
    </subcellularLocation>
</comment>
<comment type="similarity">
    <text evidence="1">Belongs to the TolB family.</text>
</comment>
<dbReference type="EMBL" id="CP000444">
    <property type="protein sequence ID" value="ABI43425.1"/>
    <property type="molecule type" value="Genomic_DNA"/>
</dbReference>
<dbReference type="SMR" id="Q0HTY0"/>
<dbReference type="KEGG" id="shm:Shewmr7_2440"/>
<dbReference type="HOGENOM" id="CLU_047123_0_0_6"/>
<dbReference type="GO" id="GO:0042597">
    <property type="term" value="C:periplasmic space"/>
    <property type="evidence" value="ECO:0007669"/>
    <property type="project" value="UniProtKB-SubCell"/>
</dbReference>
<dbReference type="GO" id="GO:0051301">
    <property type="term" value="P:cell division"/>
    <property type="evidence" value="ECO:0007669"/>
    <property type="project" value="UniProtKB-UniRule"/>
</dbReference>
<dbReference type="GO" id="GO:0017038">
    <property type="term" value="P:protein import"/>
    <property type="evidence" value="ECO:0007669"/>
    <property type="project" value="InterPro"/>
</dbReference>
<dbReference type="Gene3D" id="2.120.10.30">
    <property type="entry name" value="TolB, C-terminal domain"/>
    <property type="match status" value="1"/>
</dbReference>
<dbReference type="Gene3D" id="3.40.50.10070">
    <property type="entry name" value="TolB, N-terminal domain"/>
    <property type="match status" value="1"/>
</dbReference>
<dbReference type="HAMAP" id="MF_00671">
    <property type="entry name" value="TolB"/>
    <property type="match status" value="1"/>
</dbReference>
<dbReference type="InterPro" id="IPR011042">
    <property type="entry name" value="6-blade_b-propeller_TolB-like"/>
</dbReference>
<dbReference type="InterPro" id="IPR011659">
    <property type="entry name" value="PD40"/>
</dbReference>
<dbReference type="InterPro" id="IPR014167">
    <property type="entry name" value="Tol-Pal_TolB"/>
</dbReference>
<dbReference type="InterPro" id="IPR007195">
    <property type="entry name" value="TolB_N"/>
</dbReference>
<dbReference type="NCBIfam" id="TIGR02800">
    <property type="entry name" value="propeller_TolB"/>
    <property type="match status" value="1"/>
</dbReference>
<dbReference type="PANTHER" id="PTHR36842:SF1">
    <property type="entry name" value="PROTEIN TOLB"/>
    <property type="match status" value="1"/>
</dbReference>
<dbReference type="PANTHER" id="PTHR36842">
    <property type="entry name" value="PROTEIN TOLB HOMOLOG"/>
    <property type="match status" value="1"/>
</dbReference>
<dbReference type="Pfam" id="PF07676">
    <property type="entry name" value="PD40"/>
    <property type="match status" value="4"/>
</dbReference>
<dbReference type="Pfam" id="PF04052">
    <property type="entry name" value="TolB_N"/>
    <property type="match status" value="1"/>
</dbReference>
<dbReference type="SUPFAM" id="SSF52964">
    <property type="entry name" value="TolB, N-terminal domain"/>
    <property type="match status" value="1"/>
</dbReference>
<dbReference type="SUPFAM" id="SSF69304">
    <property type="entry name" value="Tricorn protease N-terminal domain"/>
    <property type="match status" value="1"/>
</dbReference>
<accession>Q0HTY0</accession>